<dbReference type="EC" id="2.1.3.-" evidence="1"/>
<dbReference type="EMBL" id="CP001127">
    <property type="protein sequence ID" value="ACF90974.1"/>
    <property type="molecule type" value="Genomic_DNA"/>
</dbReference>
<dbReference type="RefSeq" id="WP_000019607.1">
    <property type="nucleotide sequence ID" value="NC_011094.1"/>
</dbReference>
<dbReference type="SMR" id="B4TYS8"/>
<dbReference type="KEGG" id="sew:SeSA_A2059"/>
<dbReference type="HOGENOM" id="CLU_078475_0_0_6"/>
<dbReference type="Proteomes" id="UP000001865">
    <property type="component" value="Chromosome"/>
</dbReference>
<dbReference type="GO" id="GO:0016743">
    <property type="term" value="F:carboxyl- or carbamoyltransferase activity"/>
    <property type="evidence" value="ECO:0007669"/>
    <property type="project" value="UniProtKB-UniRule"/>
</dbReference>
<dbReference type="GO" id="GO:1904047">
    <property type="term" value="F:S-adenosyl-L-methionine binding"/>
    <property type="evidence" value="ECO:0007669"/>
    <property type="project" value="UniProtKB-UniRule"/>
</dbReference>
<dbReference type="GO" id="GO:0002098">
    <property type="term" value="P:tRNA wobble uridine modification"/>
    <property type="evidence" value="ECO:0007669"/>
    <property type="project" value="InterPro"/>
</dbReference>
<dbReference type="CDD" id="cd02440">
    <property type="entry name" value="AdoMet_MTases"/>
    <property type="match status" value="1"/>
</dbReference>
<dbReference type="FunFam" id="3.40.50.150:FF:000030">
    <property type="entry name" value="Carboxy-S-adenosyl-L-methionine synthase"/>
    <property type="match status" value="1"/>
</dbReference>
<dbReference type="Gene3D" id="3.40.50.150">
    <property type="entry name" value="Vaccinia Virus protein VP39"/>
    <property type="match status" value="1"/>
</dbReference>
<dbReference type="HAMAP" id="MF_01589">
    <property type="entry name" value="Cx_SAM_synthase"/>
    <property type="match status" value="1"/>
</dbReference>
<dbReference type="InterPro" id="IPR005271">
    <property type="entry name" value="CmoA"/>
</dbReference>
<dbReference type="InterPro" id="IPR041698">
    <property type="entry name" value="Methyltransf_25"/>
</dbReference>
<dbReference type="InterPro" id="IPR029063">
    <property type="entry name" value="SAM-dependent_MTases_sf"/>
</dbReference>
<dbReference type="NCBIfam" id="TIGR00740">
    <property type="entry name" value="carboxy-S-adenosyl-L-methionine synthase CmoA"/>
    <property type="match status" value="1"/>
</dbReference>
<dbReference type="NCBIfam" id="NF011995">
    <property type="entry name" value="PRK15451.1"/>
    <property type="match status" value="1"/>
</dbReference>
<dbReference type="PANTHER" id="PTHR43861:SF2">
    <property type="entry name" value="CARBOXY-S-ADENOSYL-L-METHIONINE SYNTHASE"/>
    <property type="match status" value="1"/>
</dbReference>
<dbReference type="PANTHER" id="PTHR43861">
    <property type="entry name" value="TRANS-ACONITATE 2-METHYLTRANSFERASE-RELATED"/>
    <property type="match status" value="1"/>
</dbReference>
<dbReference type="Pfam" id="PF13649">
    <property type="entry name" value="Methyltransf_25"/>
    <property type="match status" value="1"/>
</dbReference>
<dbReference type="PIRSF" id="PIRSF006325">
    <property type="entry name" value="MeTrfase_bac"/>
    <property type="match status" value="1"/>
</dbReference>
<dbReference type="SUPFAM" id="SSF53335">
    <property type="entry name" value="S-adenosyl-L-methionine-dependent methyltransferases"/>
    <property type="match status" value="1"/>
</dbReference>
<comment type="function">
    <text evidence="1">Catalyzes the conversion of S-adenosyl-L-methionine (SAM) to carboxy-S-adenosyl-L-methionine (Cx-SAM).</text>
</comment>
<comment type="catalytic activity">
    <reaction evidence="1">
        <text>prephenate + S-adenosyl-L-methionine = carboxy-S-adenosyl-L-methionine + 3-phenylpyruvate + H2O</text>
        <dbReference type="Rhea" id="RHEA:51692"/>
        <dbReference type="ChEBI" id="CHEBI:15377"/>
        <dbReference type="ChEBI" id="CHEBI:18005"/>
        <dbReference type="ChEBI" id="CHEBI:29934"/>
        <dbReference type="ChEBI" id="CHEBI:59789"/>
        <dbReference type="ChEBI" id="CHEBI:134278"/>
    </reaction>
</comment>
<comment type="subunit">
    <text evidence="1">Homodimer.</text>
</comment>
<comment type="similarity">
    <text evidence="1">Belongs to the class I-like SAM-binding methyltransferase superfamily. Cx-SAM synthase family.</text>
</comment>
<keyword id="KW-0949">S-adenosyl-L-methionine</keyword>
<keyword id="KW-0808">Transferase</keyword>
<name>CMOA_SALSV</name>
<evidence type="ECO:0000255" key="1">
    <source>
        <dbReference type="HAMAP-Rule" id="MF_01589"/>
    </source>
</evidence>
<reference key="1">
    <citation type="journal article" date="2011" name="J. Bacteriol.">
        <title>Comparative genomics of 28 Salmonella enterica isolates: evidence for CRISPR-mediated adaptive sublineage evolution.</title>
        <authorList>
            <person name="Fricke W.F."/>
            <person name="Mammel M.K."/>
            <person name="McDermott P.F."/>
            <person name="Tartera C."/>
            <person name="White D.G."/>
            <person name="Leclerc J.E."/>
            <person name="Ravel J."/>
            <person name="Cebula T.A."/>
        </authorList>
    </citation>
    <scope>NUCLEOTIDE SEQUENCE [LARGE SCALE GENOMIC DNA]</scope>
    <source>
        <strain>CVM19633</strain>
    </source>
</reference>
<proteinExistence type="inferred from homology"/>
<organism>
    <name type="scientific">Salmonella schwarzengrund (strain CVM19633)</name>
    <dbReference type="NCBI Taxonomy" id="439843"/>
    <lineage>
        <taxon>Bacteria</taxon>
        <taxon>Pseudomonadati</taxon>
        <taxon>Pseudomonadota</taxon>
        <taxon>Gammaproteobacteria</taxon>
        <taxon>Enterobacterales</taxon>
        <taxon>Enterobacteriaceae</taxon>
        <taxon>Salmonella</taxon>
    </lineage>
</organism>
<protein>
    <recommendedName>
        <fullName evidence="1">Carboxy-S-adenosyl-L-methionine synthase</fullName>
        <shortName evidence="1">Cx-SAM synthase</shortName>
        <ecNumber evidence="1">2.1.3.-</ecNumber>
    </recommendedName>
</protein>
<gene>
    <name evidence="1" type="primary">cmoA</name>
    <name type="ordered locus">SeSA_A2059</name>
</gene>
<accession>B4TYS8</accession>
<sequence>MSHRDTLFSAPIARLGDWTFDERVAEVFPDMIQRSVPGYSNIISMIGMLAERFVQPNTQVYDLGCSLGAATLSVRRNIRHEHCRIIAVDNSPAMIERCRRHIDAYKAPTPVEVVEGDIRDITIENASMVVLNFTLQFLEPAERQALLDKIYLGLNPGGALVLSEKFSFEDAKVGELLFNMHHDFKRANGYSELEISQKRSMLENVMLTDSVETHKARLRKAGFEHSELWFQCFNFGSLVALKAGVAA</sequence>
<feature type="chain" id="PRO_1000201368" description="Carboxy-S-adenosyl-L-methionine synthase">
    <location>
        <begin position="1"/>
        <end position="247"/>
    </location>
</feature>
<feature type="binding site" evidence="1">
    <location>
        <position position="39"/>
    </location>
    <ligand>
        <name>S-adenosyl-L-methionine</name>
        <dbReference type="ChEBI" id="CHEBI:59789"/>
    </ligand>
</feature>
<feature type="binding site" evidence="1">
    <location>
        <begin position="64"/>
        <end position="66"/>
    </location>
    <ligand>
        <name>S-adenosyl-L-methionine</name>
        <dbReference type="ChEBI" id="CHEBI:59789"/>
    </ligand>
</feature>
<feature type="binding site" evidence="1">
    <location>
        <begin position="89"/>
        <end position="90"/>
    </location>
    <ligand>
        <name>S-adenosyl-L-methionine</name>
        <dbReference type="ChEBI" id="CHEBI:59789"/>
    </ligand>
</feature>
<feature type="binding site" evidence="1">
    <location>
        <begin position="117"/>
        <end position="118"/>
    </location>
    <ligand>
        <name>S-adenosyl-L-methionine</name>
        <dbReference type="ChEBI" id="CHEBI:59789"/>
    </ligand>
</feature>
<feature type="binding site" evidence="1">
    <location>
        <position position="132"/>
    </location>
    <ligand>
        <name>S-adenosyl-L-methionine</name>
        <dbReference type="ChEBI" id="CHEBI:59789"/>
    </ligand>
</feature>
<feature type="binding site" evidence="1">
    <location>
        <position position="199"/>
    </location>
    <ligand>
        <name>S-adenosyl-L-methionine</name>
        <dbReference type="ChEBI" id="CHEBI:59789"/>
    </ligand>
</feature>